<feature type="chain" id="PRO_0000415201" description="Probable peptidoglycan glycosyltransferase FtsW">
    <location>
        <begin position="1"/>
        <end position="387"/>
    </location>
</feature>
<feature type="transmembrane region" description="Helical" evidence="1">
    <location>
        <begin position="20"/>
        <end position="40"/>
    </location>
</feature>
<feature type="transmembrane region" description="Helical" evidence="1">
    <location>
        <begin position="61"/>
        <end position="81"/>
    </location>
</feature>
<feature type="transmembrane region" description="Helical" evidence="1">
    <location>
        <begin position="86"/>
        <end position="106"/>
    </location>
</feature>
<feature type="transmembrane region" description="Helical" evidence="1">
    <location>
        <begin position="149"/>
        <end position="169"/>
    </location>
</feature>
<feature type="transmembrane region" description="Helical" evidence="1">
    <location>
        <begin position="172"/>
        <end position="192"/>
    </location>
</feature>
<feature type="transmembrane region" description="Helical" evidence="1">
    <location>
        <begin position="194"/>
        <end position="214"/>
    </location>
</feature>
<feature type="transmembrane region" description="Helical" evidence="1">
    <location>
        <begin position="284"/>
        <end position="304"/>
    </location>
</feature>
<feature type="transmembrane region" description="Helical" evidence="1">
    <location>
        <begin position="322"/>
        <end position="342"/>
    </location>
</feature>
<feature type="transmembrane region" description="Helical" evidence="1">
    <location>
        <begin position="349"/>
        <end position="369"/>
    </location>
</feature>
<keyword id="KW-0131">Cell cycle</keyword>
<keyword id="KW-0132">Cell division</keyword>
<keyword id="KW-0997">Cell inner membrane</keyword>
<keyword id="KW-1003">Cell membrane</keyword>
<keyword id="KW-0133">Cell shape</keyword>
<keyword id="KW-0961">Cell wall biogenesis/degradation</keyword>
<keyword id="KW-0328">Glycosyltransferase</keyword>
<keyword id="KW-0472">Membrane</keyword>
<keyword id="KW-0573">Peptidoglycan synthesis</keyword>
<keyword id="KW-1185">Reference proteome</keyword>
<keyword id="KW-0808">Transferase</keyword>
<keyword id="KW-0812">Transmembrane</keyword>
<keyword id="KW-1133">Transmembrane helix</keyword>
<organism>
    <name type="scientific">Nitrosococcus halophilus (strain Nc4)</name>
    <dbReference type="NCBI Taxonomy" id="472759"/>
    <lineage>
        <taxon>Bacteria</taxon>
        <taxon>Pseudomonadati</taxon>
        <taxon>Pseudomonadota</taxon>
        <taxon>Gammaproteobacteria</taxon>
        <taxon>Chromatiales</taxon>
        <taxon>Chromatiaceae</taxon>
        <taxon>Nitrosococcus</taxon>
    </lineage>
</organism>
<accession>D5BW25</accession>
<sequence length="387" mass="41953">MSRFFSTRQAVGGSTPQPDLYLLGAAVALMGLGWVMVGSASVAIADSRFGQPTYYLWRQGLFLLLGLVTAFGVWRIRLAFWEKLGPVMLLLGLGLLLLTLIPGIGVEVNGSRRWLALGPIRLQPSELAKLFMVIYLSGYLVRRSAEVRTIRGFLFPVGVFAMAGLLLLLEPDFGAVVVLFATLLGMLFLGGARLWHFLLLAALGGASLAALAWYSPYRMQRLTSFLDPWADPLNSGYQLTQALIAFGRGEWLGVGLGNSIQKLFYLPEAHTDFLYAVLAEELGLMGSLAVIALFVVFIYRVLLIGRAAERAGRTFGAHLAYGLGIWIGLQAFINLGVNMGVLPTKGLTLPLMSAGGSSSIVTCVAVALILRVDLETRFPKVARRSVK</sequence>
<dbReference type="EC" id="2.4.99.28" evidence="1"/>
<dbReference type="EMBL" id="CP001798">
    <property type="protein sequence ID" value="ADE13675.1"/>
    <property type="molecule type" value="Genomic_DNA"/>
</dbReference>
<dbReference type="RefSeq" id="WP_013031570.1">
    <property type="nucleotide sequence ID" value="NC_013960.1"/>
</dbReference>
<dbReference type="SMR" id="D5BW25"/>
<dbReference type="STRING" id="472759.Nhal_0489"/>
<dbReference type="KEGG" id="nhl:Nhal_0489"/>
<dbReference type="eggNOG" id="COG0772">
    <property type="taxonomic scope" value="Bacteria"/>
</dbReference>
<dbReference type="HOGENOM" id="CLU_029243_1_1_6"/>
<dbReference type="OrthoDB" id="9768187at2"/>
<dbReference type="UniPathway" id="UPA00219"/>
<dbReference type="Proteomes" id="UP000001844">
    <property type="component" value="Chromosome"/>
</dbReference>
<dbReference type="GO" id="GO:0032153">
    <property type="term" value="C:cell division site"/>
    <property type="evidence" value="ECO:0007669"/>
    <property type="project" value="UniProtKB-UniRule"/>
</dbReference>
<dbReference type="GO" id="GO:0005886">
    <property type="term" value="C:plasma membrane"/>
    <property type="evidence" value="ECO:0007669"/>
    <property type="project" value="UniProtKB-SubCell"/>
</dbReference>
<dbReference type="GO" id="GO:0015648">
    <property type="term" value="F:lipid-linked peptidoglycan transporter activity"/>
    <property type="evidence" value="ECO:0007669"/>
    <property type="project" value="TreeGrafter"/>
</dbReference>
<dbReference type="GO" id="GO:0008955">
    <property type="term" value="F:peptidoglycan glycosyltransferase activity"/>
    <property type="evidence" value="ECO:0007669"/>
    <property type="project" value="UniProtKB-UniRule"/>
</dbReference>
<dbReference type="GO" id="GO:0071555">
    <property type="term" value="P:cell wall organization"/>
    <property type="evidence" value="ECO:0007669"/>
    <property type="project" value="UniProtKB-KW"/>
</dbReference>
<dbReference type="GO" id="GO:0043093">
    <property type="term" value="P:FtsZ-dependent cytokinesis"/>
    <property type="evidence" value="ECO:0007669"/>
    <property type="project" value="UniProtKB-UniRule"/>
</dbReference>
<dbReference type="GO" id="GO:0009252">
    <property type="term" value="P:peptidoglycan biosynthetic process"/>
    <property type="evidence" value="ECO:0007669"/>
    <property type="project" value="UniProtKB-UniRule"/>
</dbReference>
<dbReference type="GO" id="GO:0008360">
    <property type="term" value="P:regulation of cell shape"/>
    <property type="evidence" value="ECO:0007669"/>
    <property type="project" value="UniProtKB-KW"/>
</dbReference>
<dbReference type="HAMAP" id="MF_00913">
    <property type="entry name" value="PGT_FtsW_proteobact"/>
    <property type="match status" value="1"/>
</dbReference>
<dbReference type="InterPro" id="IPR018365">
    <property type="entry name" value="Cell_cycle_FtsW-rel_CS"/>
</dbReference>
<dbReference type="InterPro" id="IPR013437">
    <property type="entry name" value="FtsW"/>
</dbReference>
<dbReference type="InterPro" id="IPR001182">
    <property type="entry name" value="FtsW/RodA"/>
</dbReference>
<dbReference type="NCBIfam" id="TIGR02614">
    <property type="entry name" value="ftsW"/>
    <property type="match status" value="1"/>
</dbReference>
<dbReference type="PANTHER" id="PTHR30474">
    <property type="entry name" value="CELL CYCLE PROTEIN"/>
    <property type="match status" value="1"/>
</dbReference>
<dbReference type="PANTHER" id="PTHR30474:SF2">
    <property type="entry name" value="PEPTIDOGLYCAN GLYCOSYLTRANSFERASE FTSW-RELATED"/>
    <property type="match status" value="1"/>
</dbReference>
<dbReference type="Pfam" id="PF01098">
    <property type="entry name" value="FTSW_RODA_SPOVE"/>
    <property type="match status" value="1"/>
</dbReference>
<dbReference type="PROSITE" id="PS00428">
    <property type="entry name" value="FTSW_RODA_SPOVE"/>
    <property type="match status" value="1"/>
</dbReference>
<proteinExistence type="inferred from homology"/>
<gene>
    <name evidence="1" type="primary">ftsW</name>
    <name type="ordered locus">Nhal_0489</name>
</gene>
<comment type="function">
    <text evidence="1">Peptidoglycan polymerase that is essential for cell division.</text>
</comment>
<comment type="catalytic activity">
    <reaction evidence="1">
        <text>[GlcNAc-(1-&gt;4)-Mur2Ac(oyl-L-Ala-gamma-D-Glu-L-Lys-D-Ala-D-Ala)](n)-di-trans,octa-cis-undecaprenyl diphosphate + beta-D-GlcNAc-(1-&gt;4)-Mur2Ac(oyl-L-Ala-gamma-D-Glu-L-Lys-D-Ala-D-Ala)-di-trans,octa-cis-undecaprenyl diphosphate = [GlcNAc-(1-&gt;4)-Mur2Ac(oyl-L-Ala-gamma-D-Glu-L-Lys-D-Ala-D-Ala)](n+1)-di-trans,octa-cis-undecaprenyl diphosphate + di-trans,octa-cis-undecaprenyl diphosphate + H(+)</text>
        <dbReference type="Rhea" id="RHEA:23708"/>
        <dbReference type="Rhea" id="RHEA-COMP:9602"/>
        <dbReference type="Rhea" id="RHEA-COMP:9603"/>
        <dbReference type="ChEBI" id="CHEBI:15378"/>
        <dbReference type="ChEBI" id="CHEBI:58405"/>
        <dbReference type="ChEBI" id="CHEBI:60033"/>
        <dbReference type="ChEBI" id="CHEBI:78435"/>
        <dbReference type="EC" id="2.4.99.28"/>
    </reaction>
</comment>
<comment type="pathway">
    <text evidence="1">Cell wall biogenesis; peptidoglycan biosynthesis.</text>
</comment>
<comment type="subcellular location">
    <subcellularLocation>
        <location evidence="1">Cell inner membrane</location>
        <topology evidence="1">Multi-pass membrane protein</topology>
    </subcellularLocation>
    <text evidence="1">Localizes to the division septum.</text>
</comment>
<comment type="similarity">
    <text evidence="1">Belongs to the SEDS family. FtsW subfamily.</text>
</comment>
<reference key="1">
    <citation type="submission" date="2010-04" db="EMBL/GenBank/DDBJ databases">
        <title>Complete genome sequence of Nitrosococcus halophilus Nc4, a salt-adapted, aerobic obligate ammonia-oxidizing sulfur purple bacterium.</title>
        <authorList>
            <consortium name="US DOE Joint Genome Institute"/>
            <person name="Campbell M.A."/>
            <person name="Malfatti S.A."/>
            <person name="Chain P.S.G."/>
            <person name="Heidelberg J.F."/>
            <person name="Ward B.B."/>
            <person name="Klotz M.G."/>
        </authorList>
    </citation>
    <scope>NUCLEOTIDE SEQUENCE [LARGE SCALE GENOMIC DNA]</scope>
    <source>
        <strain>Nc4</strain>
    </source>
</reference>
<protein>
    <recommendedName>
        <fullName evidence="1">Probable peptidoglycan glycosyltransferase FtsW</fullName>
        <shortName evidence="1">PGT</shortName>
        <ecNumber evidence="1">2.4.99.28</ecNumber>
    </recommendedName>
    <alternativeName>
        <fullName evidence="1">Cell division protein FtsW</fullName>
    </alternativeName>
    <alternativeName>
        <fullName evidence="1">Cell wall polymerase</fullName>
    </alternativeName>
    <alternativeName>
        <fullName evidence="1">Peptidoglycan polymerase</fullName>
        <shortName evidence="1">PG polymerase</shortName>
    </alternativeName>
</protein>
<evidence type="ECO:0000255" key="1">
    <source>
        <dbReference type="HAMAP-Rule" id="MF_00913"/>
    </source>
</evidence>
<name>FTSW_NITHN</name>